<keyword id="KW-0963">Cytoplasm</keyword>
<keyword id="KW-0378">Hydrolase</keyword>
<keyword id="KW-0645">Protease</keyword>
<keyword id="KW-0720">Serine protease</keyword>
<accession>A5UE11</accession>
<sequence>MSVIPMVVEQTSRGERSYDIYSRLLKERVIFLSGEVEDRMANLIVAQLLFLESEDPTKDINIYINSPGGSVTAGMAIYDTMQFIKPDIRTLCIGQACSMGAFLLAGGTAGKRAALPNARVMIHQPLGGFRGQASDIQIHAQEILKIKHTLNDRLAFHTGQSIERIEKDTDRDNFMSAEEAQAYGLVDEVLVKR</sequence>
<organism>
    <name type="scientific">Haemophilus influenzae (strain PittEE)</name>
    <dbReference type="NCBI Taxonomy" id="374930"/>
    <lineage>
        <taxon>Bacteria</taxon>
        <taxon>Pseudomonadati</taxon>
        <taxon>Pseudomonadota</taxon>
        <taxon>Gammaproteobacteria</taxon>
        <taxon>Pasteurellales</taxon>
        <taxon>Pasteurellaceae</taxon>
        <taxon>Haemophilus</taxon>
    </lineage>
</organism>
<comment type="function">
    <text evidence="1">Cleaves peptides in various proteins in a process that requires ATP hydrolysis. Has a chymotrypsin-like activity. Plays a major role in the degradation of misfolded proteins.</text>
</comment>
<comment type="catalytic activity">
    <reaction evidence="1">
        <text>Hydrolysis of proteins to small peptides in the presence of ATP and magnesium. alpha-casein is the usual test substrate. In the absence of ATP, only oligopeptides shorter than five residues are hydrolyzed (such as succinyl-Leu-Tyr-|-NHMec, and Leu-Tyr-Leu-|-Tyr-Trp, in which cleavage of the -Tyr-|-Leu- and -Tyr-|-Trp bonds also occurs).</text>
        <dbReference type="EC" id="3.4.21.92"/>
    </reaction>
</comment>
<comment type="subunit">
    <text evidence="1">Fourteen ClpP subunits assemble into 2 heptameric rings which stack back to back to give a disk-like structure with a central cavity, resembling the structure of eukaryotic proteasomes.</text>
</comment>
<comment type="subcellular location">
    <subcellularLocation>
        <location evidence="1">Cytoplasm</location>
    </subcellularLocation>
</comment>
<comment type="similarity">
    <text evidence="1">Belongs to the peptidase S14 family.</text>
</comment>
<dbReference type="EC" id="3.4.21.92" evidence="1"/>
<dbReference type="EMBL" id="CP000671">
    <property type="protein sequence ID" value="ABQ99012.1"/>
    <property type="molecule type" value="Genomic_DNA"/>
</dbReference>
<dbReference type="SMR" id="A5UE11"/>
<dbReference type="MEROPS" id="S14.001"/>
<dbReference type="KEGG" id="hip:CGSHiEE_08555"/>
<dbReference type="HOGENOM" id="CLU_058707_3_2_6"/>
<dbReference type="GO" id="GO:0005737">
    <property type="term" value="C:cytoplasm"/>
    <property type="evidence" value="ECO:0007669"/>
    <property type="project" value="UniProtKB-SubCell"/>
</dbReference>
<dbReference type="GO" id="GO:0009368">
    <property type="term" value="C:endopeptidase Clp complex"/>
    <property type="evidence" value="ECO:0007669"/>
    <property type="project" value="TreeGrafter"/>
</dbReference>
<dbReference type="GO" id="GO:0004176">
    <property type="term" value="F:ATP-dependent peptidase activity"/>
    <property type="evidence" value="ECO:0007669"/>
    <property type="project" value="InterPro"/>
</dbReference>
<dbReference type="GO" id="GO:0051117">
    <property type="term" value="F:ATPase binding"/>
    <property type="evidence" value="ECO:0007669"/>
    <property type="project" value="TreeGrafter"/>
</dbReference>
<dbReference type="GO" id="GO:0004252">
    <property type="term" value="F:serine-type endopeptidase activity"/>
    <property type="evidence" value="ECO:0007669"/>
    <property type="project" value="UniProtKB-UniRule"/>
</dbReference>
<dbReference type="GO" id="GO:0006515">
    <property type="term" value="P:protein quality control for misfolded or incompletely synthesized proteins"/>
    <property type="evidence" value="ECO:0007669"/>
    <property type="project" value="TreeGrafter"/>
</dbReference>
<dbReference type="CDD" id="cd07017">
    <property type="entry name" value="S14_ClpP_2"/>
    <property type="match status" value="1"/>
</dbReference>
<dbReference type="FunFam" id="3.90.226.10:FF:000001">
    <property type="entry name" value="ATP-dependent Clp protease proteolytic subunit"/>
    <property type="match status" value="1"/>
</dbReference>
<dbReference type="Gene3D" id="3.90.226.10">
    <property type="entry name" value="2-enoyl-CoA Hydratase, Chain A, domain 1"/>
    <property type="match status" value="1"/>
</dbReference>
<dbReference type="HAMAP" id="MF_00444">
    <property type="entry name" value="ClpP"/>
    <property type="match status" value="1"/>
</dbReference>
<dbReference type="InterPro" id="IPR001907">
    <property type="entry name" value="ClpP"/>
</dbReference>
<dbReference type="InterPro" id="IPR029045">
    <property type="entry name" value="ClpP/crotonase-like_dom_sf"/>
</dbReference>
<dbReference type="InterPro" id="IPR023562">
    <property type="entry name" value="ClpP/TepA"/>
</dbReference>
<dbReference type="InterPro" id="IPR033135">
    <property type="entry name" value="ClpP_His_AS"/>
</dbReference>
<dbReference type="InterPro" id="IPR018215">
    <property type="entry name" value="ClpP_Ser_AS"/>
</dbReference>
<dbReference type="NCBIfam" id="TIGR00493">
    <property type="entry name" value="clpP"/>
    <property type="match status" value="1"/>
</dbReference>
<dbReference type="NCBIfam" id="NF001368">
    <property type="entry name" value="PRK00277.1"/>
    <property type="match status" value="1"/>
</dbReference>
<dbReference type="NCBIfam" id="NF009205">
    <property type="entry name" value="PRK12553.1"/>
    <property type="match status" value="1"/>
</dbReference>
<dbReference type="PANTHER" id="PTHR10381">
    <property type="entry name" value="ATP-DEPENDENT CLP PROTEASE PROTEOLYTIC SUBUNIT"/>
    <property type="match status" value="1"/>
</dbReference>
<dbReference type="PANTHER" id="PTHR10381:SF70">
    <property type="entry name" value="ATP-DEPENDENT CLP PROTEASE PROTEOLYTIC SUBUNIT"/>
    <property type="match status" value="1"/>
</dbReference>
<dbReference type="Pfam" id="PF00574">
    <property type="entry name" value="CLP_protease"/>
    <property type="match status" value="1"/>
</dbReference>
<dbReference type="PRINTS" id="PR00127">
    <property type="entry name" value="CLPPROTEASEP"/>
</dbReference>
<dbReference type="SUPFAM" id="SSF52096">
    <property type="entry name" value="ClpP/crotonase"/>
    <property type="match status" value="1"/>
</dbReference>
<dbReference type="PROSITE" id="PS00382">
    <property type="entry name" value="CLP_PROTEASE_HIS"/>
    <property type="match status" value="1"/>
</dbReference>
<dbReference type="PROSITE" id="PS00381">
    <property type="entry name" value="CLP_PROTEASE_SER"/>
    <property type="match status" value="1"/>
</dbReference>
<feature type="chain" id="PRO_1000026097" description="ATP-dependent Clp protease proteolytic subunit">
    <location>
        <begin position="1"/>
        <end position="193"/>
    </location>
</feature>
<feature type="active site" description="Nucleophile" evidence="1">
    <location>
        <position position="98"/>
    </location>
</feature>
<feature type="active site" evidence="1">
    <location>
        <position position="123"/>
    </location>
</feature>
<protein>
    <recommendedName>
        <fullName evidence="1">ATP-dependent Clp protease proteolytic subunit</fullName>
        <ecNumber evidence="1">3.4.21.92</ecNumber>
    </recommendedName>
    <alternativeName>
        <fullName evidence="1">Endopeptidase Clp</fullName>
    </alternativeName>
</protein>
<evidence type="ECO:0000255" key="1">
    <source>
        <dbReference type="HAMAP-Rule" id="MF_00444"/>
    </source>
</evidence>
<gene>
    <name evidence="1" type="primary">clpP</name>
    <name type="ordered locus">CGSHiEE_08555</name>
</gene>
<name>CLPP_HAEIE</name>
<reference key="1">
    <citation type="journal article" date="2007" name="Genome Biol.">
        <title>Characterization and modeling of the Haemophilus influenzae core and supragenomes based on the complete genomic sequences of Rd and 12 clinical nontypeable strains.</title>
        <authorList>
            <person name="Hogg J.S."/>
            <person name="Hu F.Z."/>
            <person name="Janto B."/>
            <person name="Boissy R."/>
            <person name="Hayes J."/>
            <person name="Keefe R."/>
            <person name="Post J.C."/>
            <person name="Ehrlich G.D."/>
        </authorList>
    </citation>
    <scope>NUCLEOTIDE SEQUENCE [LARGE SCALE GENOMIC DNA]</scope>
    <source>
        <strain>PittEE</strain>
    </source>
</reference>
<proteinExistence type="inferred from homology"/>